<gene>
    <name evidence="1" type="primary">glcB</name>
    <name type="ordered locus">BOV_1595</name>
</gene>
<sequence length="728" mass="80030">MGSAEKRNYVEIEGLAVAPELVEFLAKEAAPGTGVEPEKFWKGFATIIRDLAPKNRALLAKRDELQARIDAWYKENRDKGYSQADYQQFLKDIGYLLPEGGAFSVSTTNVDPEITHIAGPQLVVPVMNARYALNAANARWGSLYDALYGTDAISEADGAEKGKGYNPKRGEKVIAWAKNFLDESAPLSTGKWADVAGLAVNDGKLEIRLTDGSATTLKDESQFNGYNGDAASPTNVLLAKHNMHVDIVINADHPIGKTDPAHIADVVLESAISTIQDCEDSIAAVDAEDKVAVYRNWLGLMNGKLEDTFEKNGKQMTRRLNGDRTYTAPDGSTLTLKGRSLMLVRNVGHLMTNPAILDAEGNEVPEGIMDAAFTSLIALHDIGPNGRHMNSREGSVYIVKPKMHGPEEVAFANEIFTRTEEMLGMKPNTLKIGIMDEERRTTVNLKEAIRAAKDRVVFINTGFLDRTGDEIHTSMEAGPMIRKGDMKQAAWIGAYEQWNVDIGLECGLSGHAQIGKGMWAMPDMMAAMLEQKIAHPKAGANTAWVPSPTAATLHATHYHKIDVVAVQEKLKSRPRAKLDDILSVPVAVRPNWTPDDIQHEIDNNAQGILGYVVRWIDQGVGCSKVPDINNVGLMEDRATLRISAQHIANWLYHGVVSEAQVMETMKRMAAIVDKQNEGDPLYRPMAADFDKSIAFQAACDLVFKGREQPNGYTEPVLHRRRLELKQAS</sequence>
<comment type="function">
    <text evidence="1">Involved in the glycolate utilization. Catalyzes the condensation and subsequent hydrolysis of acetyl-coenzyme A (acetyl-CoA) and glyoxylate to form malate and CoA.</text>
</comment>
<comment type="catalytic activity">
    <reaction evidence="1">
        <text>glyoxylate + acetyl-CoA + H2O = (S)-malate + CoA + H(+)</text>
        <dbReference type="Rhea" id="RHEA:18181"/>
        <dbReference type="ChEBI" id="CHEBI:15377"/>
        <dbReference type="ChEBI" id="CHEBI:15378"/>
        <dbReference type="ChEBI" id="CHEBI:15589"/>
        <dbReference type="ChEBI" id="CHEBI:36655"/>
        <dbReference type="ChEBI" id="CHEBI:57287"/>
        <dbReference type="ChEBI" id="CHEBI:57288"/>
        <dbReference type="EC" id="2.3.3.9"/>
    </reaction>
</comment>
<comment type="cofactor">
    <cofactor evidence="1">
        <name>Mg(2+)</name>
        <dbReference type="ChEBI" id="CHEBI:18420"/>
    </cofactor>
</comment>
<comment type="pathway">
    <text evidence="1">Carbohydrate metabolism; glyoxylate cycle; (S)-malate from isocitrate: step 2/2.</text>
</comment>
<comment type="subunit">
    <text evidence="1">Monomer.</text>
</comment>
<comment type="subcellular location">
    <subcellularLocation>
        <location evidence="1">Cytoplasm</location>
    </subcellularLocation>
</comment>
<comment type="similarity">
    <text evidence="1">Belongs to the malate synthase family. GlcB subfamily.</text>
</comment>
<organism>
    <name type="scientific">Brucella ovis (strain ATCC 25840 / 63/290 / NCTC 10512)</name>
    <dbReference type="NCBI Taxonomy" id="444178"/>
    <lineage>
        <taxon>Bacteria</taxon>
        <taxon>Pseudomonadati</taxon>
        <taxon>Pseudomonadota</taxon>
        <taxon>Alphaproteobacteria</taxon>
        <taxon>Hyphomicrobiales</taxon>
        <taxon>Brucellaceae</taxon>
        <taxon>Brucella/Ochrobactrum group</taxon>
        <taxon>Brucella</taxon>
    </lineage>
</organism>
<evidence type="ECO:0000255" key="1">
    <source>
        <dbReference type="HAMAP-Rule" id="MF_00641"/>
    </source>
</evidence>
<accession>A5VS09</accession>
<keyword id="KW-0963">Cytoplasm</keyword>
<keyword id="KW-0329">Glyoxylate bypass</keyword>
<keyword id="KW-0460">Magnesium</keyword>
<keyword id="KW-0479">Metal-binding</keyword>
<keyword id="KW-0558">Oxidation</keyword>
<keyword id="KW-0808">Transferase</keyword>
<keyword id="KW-0816">Tricarboxylic acid cycle</keyword>
<protein>
    <recommendedName>
        <fullName evidence="1">Malate synthase G</fullName>
        <ecNumber evidence="1">2.3.3.9</ecNumber>
    </recommendedName>
</protein>
<dbReference type="EC" id="2.3.3.9" evidence="1"/>
<dbReference type="EMBL" id="CP000708">
    <property type="protein sequence ID" value="ABQ60552.1"/>
    <property type="molecule type" value="Genomic_DNA"/>
</dbReference>
<dbReference type="RefSeq" id="WP_006155575.1">
    <property type="nucleotide sequence ID" value="NC_009505.1"/>
</dbReference>
<dbReference type="SMR" id="A5VS09"/>
<dbReference type="GeneID" id="45124960"/>
<dbReference type="KEGG" id="bov:BOV_1595"/>
<dbReference type="HOGENOM" id="CLU_028446_1_0_5"/>
<dbReference type="PhylomeDB" id="A5VS09"/>
<dbReference type="UniPathway" id="UPA00703">
    <property type="reaction ID" value="UER00720"/>
</dbReference>
<dbReference type="Proteomes" id="UP000006383">
    <property type="component" value="Chromosome I"/>
</dbReference>
<dbReference type="GO" id="GO:0005829">
    <property type="term" value="C:cytosol"/>
    <property type="evidence" value="ECO:0007669"/>
    <property type="project" value="TreeGrafter"/>
</dbReference>
<dbReference type="GO" id="GO:0000287">
    <property type="term" value="F:magnesium ion binding"/>
    <property type="evidence" value="ECO:0007669"/>
    <property type="project" value="TreeGrafter"/>
</dbReference>
<dbReference type="GO" id="GO:0004474">
    <property type="term" value="F:malate synthase activity"/>
    <property type="evidence" value="ECO:0007669"/>
    <property type="project" value="UniProtKB-UniRule"/>
</dbReference>
<dbReference type="GO" id="GO:0009436">
    <property type="term" value="P:glyoxylate catabolic process"/>
    <property type="evidence" value="ECO:0007669"/>
    <property type="project" value="TreeGrafter"/>
</dbReference>
<dbReference type="GO" id="GO:0006097">
    <property type="term" value="P:glyoxylate cycle"/>
    <property type="evidence" value="ECO:0007669"/>
    <property type="project" value="UniProtKB-UniRule"/>
</dbReference>
<dbReference type="GO" id="GO:0006099">
    <property type="term" value="P:tricarboxylic acid cycle"/>
    <property type="evidence" value="ECO:0007669"/>
    <property type="project" value="UniProtKB-KW"/>
</dbReference>
<dbReference type="CDD" id="cd00728">
    <property type="entry name" value="malate_synt_G"/>
    <property type="match status" value="1"/>
</dbReference>
<dbReference type="FunFam" id="3.20.20.360:FF:000002">
    <property type="entry name" value="Malate synthase G"/>
    <property type="match status" value="1"/>
</dbReference>
<dbReference type="Gene3D" id="3.20.20.360">
    <property type="entry name" value="Malate synthase, domain 3"/>
    <property type="match status" value="2"/>
</dbReference>
<dbReference type="Gene3D" id="1.20.1220.12">
    <property type="entry name" value="Malate synthase, domain III"/>
    <property type="match status" value="1"/>
</dbReference>
<dbReference type="HAMAP" id="MF_00641">
    <property type="entry name" value="Malate_synth_G"/>
    <property type="match status" value="1"/>
</dbReference>
<dbReference type="InterPro" id="IPR044856">
    <property type="entry name" value="Malate_synth_C_sf"/>
</dbReference>
<dbReference type="InterPro" id="IPR011076">
    <property type="entry name" value="Malate_synth_sf"/>
</dbReference>
<dbReference type="InterPro" id="IPR001465">
    <property type="entry name" value="Malate_synthase_TIM"/>
</dbReference>
<dbReference type="InterPro" id="IPR006253">
    <property type="entry name" value="Malate_synthG"/>
</dbReference>
<dbReference type="InterPro" id="IPR048355">
    <property type="entry name" value="MS_C"/>
</dbReference>
<dbReference type="InterPro" id="IPR048356">
    <property type="entry name" value="MS_N"/>
</dbReference>
<dbReference type="InterPro" id="IPR046363">
    <property type="entry name" value="MS_N_TIM-barrel_dom"/>
</dbReference>
<dbReference type="InterPro" id="IPR048357">
    <property type="entry name" value="MSG_insertion"/>
</dbReference>
<dbReference type="NCBIfam" id="TIGR01345">
    <property type="entry name" value="malate_syn_G"/>
    <property type="match status" value="1"/>
</dbReference>
<dbReference type="NCBIfam" id="NF002825">
    <property type="entry name" value="PRK02999.1"/>
    <property type="match status" value="1"/>
</dbReference>
<dbReference type="PANTHER" id="PTHR42739">
    <property type="entry name" value="MALATE SYNTHASE G"/>
    <property type="match status" value="1"/>
</dbReference>
<dbReference type="PANTHER" id="PTHR42739:SF1">
    <property type="entry name" value="MALATE SYNTHASE G"/>
    <property type="match status" value="1"/>
</dbReference>
<dbReference type="Pfam" id="PF20659">
    <property type="entry name" value="MS_C"/>
    <property type="match status" value="1"/>
</dbReference>
<dbReference type="Pfam" id="PF20656">
    <property type="entry name" value="MS_N"/>
    <property type="match status" value="1"/>
</dbReference>
<dbReference type="Pfam" id="PF01274">
    <property type="entry name" value="MS_TIM-barrel"/>
    <property type="match status" value="1"/>
</dbReference>
<dbReference type="Pfam" id="PF20658">
    <property type="entry name" value="MSG_insertion"/>
    <property type="match status" value="1"/>
</dbReference>
<dbReference type="SUPFAM" id="SSF51645">
    <property type="entry name" value="Malate synthase G"/>
    <property type="match status" value="1"/>
</dbReference>
<reference key="1">
    <citation type="journal article" date="2009" name="PLoS ONE">
        <title>Genome degradation in Brucella ovis corresponds with narrowing of its host range and tissue tropism.</title>
        <authorList>
            <person name="Tsolis R.M."/>
            <person name="Seshadri R."/>
            <person name="Santos R.L."/>
            <person name="Sangari F.J."/>
            <person name="Lobo J.M."/>
            <person name="de Jong M.F."/>
            <person name="Ren Q."/>
            <person name="Myers G."/>
            <person name="Brinkac L.M."/>
            <person name="Nelson W.C."/>
            <person name="Deboy R.T."/>
            <person name="Angiuoli S."/>
            <person name="Khouri H."/>
            <person name="Dimitrov G."/>
            <person name="Robinson J.R."/>
            <person name="Mulligan S."/>
            <person name="Walker R.L."/>
            <person name="Elzer P.E."/>
            <person name="Hassan K.A."/>
            <person name="Paulsen I.T."/>
        </authorList>
    </citation>
    <scope>NUCLEOTIDE SEQUENCE [LARGE SCALE GENOMIC DNA]</scope>
    <source>
        <strain>ATCC 25840 / 63/290 / NCTC 10512</strain>
    </source>
</reference>
<proteinExistence type="inferred from homology"/>
<name>MASZ_BRUO2</name>
<feature type="chain" id="PRO_1000056899" description="Malate synthase G">
    <location>
        <begin position="1"/>
        <end position="728"/>
    </location>
</feature>
<feature type="active site" description="Proton acceptor" evidence="1">
    <location>
        <position position="345"/>
    </location>
</feature>
<feature type="active site" description="Proton donor" evidence="1">
    <location>
        <position position="636"/>
    </location>
</feature>
<feature type="binding site" evidence="1">
    <location>
        <position position="123"/>
    </location>
    <ligand>
        <name>acetyl-CoA</name>
        <dbReference type="ChEBI" id="CHEBI:57288"/>
    </ligand>
</feature>
<feature type="binding site" evidence="1">
    <location>
        <begin position="130"/>
        <end position="131"/>
    </location>
    <ligand>
        <name>acetyl-CoA</name>
        <dbReference type="ChEBI" id="CHEBI:57288"/>
    </ligand>
</feature>
<feature type="binding site" evidence="1">
    <location>
        <position position="281"/>
    </location>
    <ligand>
        <name>acetyl-CoA</name>
        <dbReference type="ChEBI" id="CHEBI:57288"/>
    </ligand>
</feature>
<feature type="binding site" evidence="1">
    <location>
        <position position="318"/>
    </location>
    <ligand>
        <name>acetyl-CoA</name>
        <dbReference type="ChEBI" id="CHEBI:57288"/>
    </ligand>
</feature>
<feature type="binding site" evidence="1">
    <location>
        <position position="345"/>
    </location>
    <ligand>
        <name>glyoxylate</name>
        <dbReference type="ChEBI" id="CHEBI:36655"/>
    </ligand>
</feature>
<feature type="binding site" evidence="1">
    <location>
        <position position="437"/>
    </location>
    <ligand>
        <name>glyoxylate</name>
        <dbReference type="ChEBI" id="CHEBI:36655"/>
    </ligand>
</feature>
<feature type="binding site" evidence="1">
    <location>
        <position position="437"/>
    </location>
    <ligand>
        <name>Mg(2+)</name>
        <dbReference type="ChEBI" id="CHEBI:18420"/>
    </ligand>
</feature>
<feature type="binding site" evidence="1">
    <location>
        <begin position="462"/>
        <end position="465"/>
    </location>
    <ligand>
        <name>glyoxylate</name>
        <dbReference type="ChEBI" id="CHEBI:36655"/>
    </ligand>
</feature>
<feature type="binding site" evidence="1">
    <location>
        <position position="465"/>
    </location>
    <ligand>
        <name>Mg(2+)</name>
        <dbReference type="ChEBI" id="CHEBI:18420"/>
    </ligand>
</feature>
<feature type="binding site" evidence="1">
    <location>
        <position position="546"/>
    </location>
    <ligand>
        <name>acetyl-CoA</name>
        <dbReference type="ChEBI" id="CHEBI:57288"/>
    </ligand>
</feature>
<feature type="modified residue" description="Cysteine sulfenic acid (-SOH)" evidence="1">
    <location>
        <position position="622"/>
    </location>
</feature>